<feature type="chain" id="PRO_0000396401" description="Ubiquitin">
    <location>
        <begin position="1"/>
        <end position="76"/>
    </location>
</feature>
<feature type="chain" id="PRO_0000396402" description="Ubiquitin">
    <location>
        <begin position="77"/>
        <end position="152"/>
    </location>
</feature>
<feature type="chain" id="PRO_0000396403" description="Ubiquitin">
    <location>
        <begin position="153"/>
        <end position="228"/>
    </location>
</feature>
<feature type="chain" id="PRO_0000396404" description="Ubiquitin">
    <location>
        <begin position="229"/>
        <end position="304"/>
    </location>
</feature>
<feature type="chain" id="PRO_0000396405" description="Ubiquitin">
    <location>
        <begin position="305"/>
        <end position="380"/>
    </location>
</feature>
<feature type="chain" id="PRO_0000396406" description="Ubiquitin">
    <location>
        <begin position="381"/>
        <end position="456"/>
    </location>
</feature>
<feature type="propeptide" id="PRO_0000396407">
    <location>
        <position position="457"/>
    </location>
</feature>
<feature type="domain" description="Ubiquitin-like 1" evidence="2">
    <location>
        <begin position="1"/>
        <end position="76"/>
    </location>
</feature>
<feature type="domain" description="Ubiquitin-like 2" evidence="2">
    <location>
        <begin position="77"/>
        <end position="152"/>
    </location>
</feature>
<feature type="domain" description="Ubiquitin-like 3" evidence="2">
    <location>
        <begin position="153"/>
        <end position="228"/>
    </location>
</feature>
<feature type="domain" description="Ubiquitin-like 4" evidence="2">
    <location>
        <begin position="229"/>
        <end position="304"/>
    </location>
</feature>
<feature type="domain" description="Ubiquitin-like 5" evidence="2">
    <location>
        <begin position="305"/>
        <end position="380"/>
    </location>
</feature>
<feature type="domain" description="Ubiquitin-like 6" evidence="2">
    <location>
        <begin position="381"/>
        <end position="456"/>
    </location>
</feature>
<feature type="cross-link" description="Glycyl lysine isopeptide (Lys-Gly) (interchain with G-Cter in ubiquitin)" evidence="1">
    <location>
        <position position="48"/>
    </location>
</feature>
<feature type="cross-link" description="Glycyl lysine isopeptide (Gly-Lys) (interchain with K-? in acceptor proteins)" evidence="2">
    <location>
        <position position="76"/>
    </location>
</feature>
<accession>P0CG85</accession>
<accession>O82079</accession>
<accession>P03993</accession>
<accession>P69320</accession>
<evidence type="ECO:0000250" key="1"/>
<evidence type="ECO:0000255" key="2">
    <source>
        <dbReference type="PROSITE-ProRule" id="PRU00214"/>
    </source>
</evidence>
<evidence type="ECO:0000305" key="3"/>
<organism>
    <name type="scientific">Nicotiana sylvestris</name>
    <name type="common">Wood tobacco</name>
    <name type="synonym">South American tobacco</name>
    <dbReference type="NCBI Taxonomy" id="4096"/>
    <lineage>
        <taxon>Eukaryota</taxon>
        <taxon>Viridiplantae</taxon>
        <taxon>Streptophyta</taxon>
        <taxon>Embryophyta</taxon>
        <taxon>Tracheophyta</taxon>
        <taxon>Spermatophyta</taxon>
        <taxon>Magnoliopsida</taxon>
        <taxon>eudicotyledons</taxon>
        <taxon>Gunneridae</taxon>
        <taxon>Pentapetalae</taxon>
        <taxon>asterids</taxon>
        <taxon>lamiids</taxon>
        <taxon>Solanales</taxon>
        <taxon>Solanaceae</taxon>
        <taxon>Nicotianoideae</taxon>
        <taxon>Nicotianeae</taxon>
        <taxon>Nicotiana</taxon>
    </lineage>
</organism>
<reference key="1">
    <citation type="journal article" date="1992" name="Plant Mol. Biol.">
        <title>Ubiquitin genes are differentially regulated in protoplast-derived cultures of Nicotiana sylvestris and in response to various stresses.</title>
        <authorList>
            <person name="Genschik P."/>
            <person name="Parmentier Y."/>
            <person name="Durr A."/>
            <person name="Marbach J."/>
            <person name="Criqui M.-C."/>
            <person name="Jamet E."/>
            <person name="Fleck J."/>
        </authorList>
    </citation>
    <scope>NUCLEOTIDE SEQUENCE [MRNA]</scope>
    <source>
        <tissue>Leaf</tissue>
    </source>
</reference>
<protein>
    <recommendedName>
        <fullName>Polyubiquitin</fullName>
    </recommendedName>
    <component>
        <recommendedName>
            <fullName>Ubiquitin</fullName>
        </recommendedName>
    </component>
</protein>
<gene>
    <name type="primary">UBI11</name>
</gene>
<proteinExistence type="evidence at transcript level"/>
<name>UBI1P_NICSY</name>
<keyword id="KW-0963">Cytoplasm</keyword>
<keyword id="KW-1017">Isopeptide bond</keyword>
<keyword id="KW-0539">Nucleus</keyword>
<keyword id="KW-1185">Reference proteome</keyword>
<keyword id="KW-0677">Repeat</keyword>
<keyword id="KW-0832">Ubl conjugation</keyword>
<sequence length="457" mass="51206">MQIFVKTLTGKTITLEVESSDTIDNVKAKIQDKEGIPPDQQRLIFAGKQLEDGRTLADYNIQKESTLHLVLRLRGGMQIFVKTLTGKTITLEVESSDTIDNVKAKIQDKEGIPPDQQRLIFAGKQLEDGRTLADYNIQKESTLHLVLRLRGGMQIFVKTLTGKTITLEVESSDTIDNVKAKIQDKEGIPPDQQRLIFAGKQLEDGRTLADYNIQKESTLHLVLRLRGGMQIFVKTLTGKTITLEVESSDTIDNVKAKIQDKEGIPPDQQRLIFAGKQLEDGRTLADYNIQKESTLHLVLRLRGGMQIFVKTLTGKTITLEVESSDTIDNVKAKIQDKEGIPPDQQRLIFAGKQLEDGRTLADYNIQKESTLHLVLRLRGGMQIFVKTLTGKTITLEVESSDTIDNVKAKIQDKEGIPPDQQRLIFAGKQLEDGRTLADYNIQKESTLHLVLRLRGGF</sequence>
<dbReference type="EMBL" id="M74101">
    <property type="protein sequence ID" value="AAA34123.1"/>
    <property type="molecule type" value="mRNA"/>
</dbReference>
<dbReference type="RefSeq" id="XP_009792248.1">
    <property type="nucleotide sequence ID" value="XM_009793946.1"/>
</dbReference>
<dbReference type="SMR" id="P0CG85"/>
<dbReference type="STRING" id="4096.P0CG85"/>
<dbReference type="GeneID" id="104239332"/>
<dbReference type="KEGG" id="nsy:104239332"/>
<dbReference type="eggNOG" id="KOG0001">
    <property type="taxonomic scope" value="Eukaryota"/>
</dbReference>
<dbReference type="OrthoDB" id="19702at4085"/>
<dbReference type="Proteomes" id="UP000189701">
    <property type="component" value="Unplaced"/>
</dbReference>
<dbReference type="GO" id="GO:0005737">
    <property type="term" value="C:cytoplasm"/>
    <property type="evidence" value="ECO:0007669"/>
    <property type="project" value="UniProtKB-SubCell"/>
</dbReference>
<dbReference type="GO" id="GO:0005634">
    <property type="term" value="C:nucleus"/>
    <property type="evidence" value="ECO:0007669"/>
    <property type="project" value="UniProtKB-SubCell"/>
</dbReference>
<dbReference type="GO" id="GO:0003729">
    <property type="term" value="F:mRNA binding"/>
    <property type="evidence" value="ECO:0007669"/>
    <property type="project" value="UniProtKB-ARBA"/>
</dbReference>
<dbReference type="CDD" id="cd01803">
    <property type="entry name" value="Ubl_ubiquitin"/>
    <property type="match status" value="6"/>
</dbReference>
<dbReference type="FunFam" id="3.10.20.90:FF:000016">
    <property type="entry name" value="Polyubiquitin 3"/>
    <property type="match status" value="6"/>
</dbReference>
<dbReference type="Gene3D" id="3.10.20.90">
    <property type="entry name" value="Phosphatidylinositol 3-kinase Catalytic Subunit, Chain A, domain 1"/>
    <property type="match status" value="6"/>
</dbReference>
<dbReference type="InterPro" id="IPR000626">
    <property type="entry name" value="Ubiquitin-like_dom"/>
</dbReference>
<dbReference type="InterPro" id="IPR029071">
    <property type="entry name" value="Ubiquitin-like_domsf"/>
</dbReference>
<dbReference type="InterPro" id="IPR019954">
    <property type="entry name" value="Ubiquitin_CS"/>
</dbReference>
<dbReference type="InterPro" id="IPR019956">
    <property type="entry name" value="Ubiquitin_dom"/>
</dbReference>
<dbReference type="InterPro" id="IPR050158">
    <property type="entry name" value="Ubiquitin_ubiquitin-like"/>
</dbReference>
<dbReference type="PANTHER" id="PTHR10666">
    <property type="entry name" value="UBIQUITIN"/>
    <property type="match status" value="1"/>
</dbReference>
<dbReference type="Pfam" id="PF00240">
    <property type="entry name" value="ubiquitin"/>
    <property type="match status" value="6"/>
</dbReference>
<dbReference type="PRINTS" id="PR00348">
    <property type="entry name" value="UBIQUITIN"/>
</dbReference>
<dbReference type="SMART" id="SM00213">
    <property type="entry name" value="UBQ"/>
    <property type="match status" value="6"/>
</dbReference>
<dbReference type="SUPFAM" id="SSF54236">
    <property type="entry name" value="Ubiquitin-like"/>
    <property type="match status" value="6"/>
</dbReference>
<dbReference type="PROSITE" id="PS00299">
    <property type="entry name" value="UBIQUITIN_1"/>
    <property type="match status" value="6"/>
</dbReference>
<dbReference type="PROSITE" id="PS50053">
    <property type="entry name" value="UBIQUITIN_2"/>
    <property type="match status" value="6"/>
</dbReference>
<comment type="function">
    <text evidence="1">Ubiquitin exists either covalently attached to another protein, or free (unanchored). When covalently bound, it is conjugated to target proteins via an isopeptide bond either as a monomer (monoubiquitin), a polymer linked via different Lys residues of the ubiquitin (polyubiquitin chains) or a linear polymer linked via the initiator Met of the ubiquitin (linear polyubiquitin chains). Polyubiquitin chains, when attached to a target protein, have different functions depending on the Lys residue of the ubiquitin that is linked: Lys-48-linked is involved in protein degradation via the proteasome. Linear polymer chains formed via attachment by the initiator Met lead to cell signaling. Ubiquitin is usually conjugated to Lys residues of target proteins, however, in rare cases, conjugation to Cys or Ser residues has been observed. When polyubiquitin is free (unanchored-polyubiquitin), it also has distinct roles, such as in activation of protein kinases, and in signaling (By similarity).</text>
</comment>
<comment type="subcellular location">
    <subcellularLocation>
        <location evidence="1">Cytoplasm</location>
    </subcellularLocation>
    <subcellularLocation>
        <location evidence="1">Nucleus</location>
    </subcellularLocation>
</comment>
<comment type="miscellaneous">
    <text>Ubiquitin is generally synthesized as a polyubiquitin precursor with tandem head to tail repeats. Often, there is one to three additional amino acids after the last repeat, removed in the mature protein. Alternatively, ubiquitin extension protein is synthesized as a single copy of ubiquitin fused to a ribosomal protein (either L40 or S27A) or to an ubiquitin-related protein (either RUB1 or RUB2). Following translation, extension protein is cleaved from ubiquitin.</text>
</comment>
<comment type="miscellaneous">
    <text>For the sake of clarity sequence features are annotated only for the first chain, and are not repeated for each of the following chains.</text>
</comment>
<comment type="similarity">
    <text evidence="3">Belongs to the ubiquitin family.</text>
</comment>